<evidence type="ECO:0000255" key="1">
    <source>
        <dbReference type="HAMAP-Rule" id="MF_00361"/>
    </source>
</evidence>
<sequence>MKNTGKRIDLIANRKPQSQRVLYELRDRLKRNQFILNDTNPDIVISIGGDGMLLSAFHKYENQLDKVRFIGLHTGHLGFYTDYRDFELDKLVTNLQLDTGARVSYPVLNVKVFLENGEVKIFRALNEASIRRSDRTMVADIVINGVPFERFRGDGLTVSTPTGSTAYNKSLGGAVLHPTIEALQLTEIASLNNRVYRTLGSSIIVPKKDKIELIPTRNDYHTISVDNSVYSFRNIERIEYQIDHHKIHFVATPSHTSFWNRVKDAFIGEVDE</sequence>
<comment type="function">
    <text evidence="1">Involved in the regulation of the intracellular balance of NAD and NADP, and is a key enzyme in the biosynthesis of NADP. Catalyzes specifically the phosphorylation on 2'-hydroxyl of the adenosine moiety of NAD to yield NADP.</text>
</comment>
<comment type="catalytic activity">
    <reaction evidence="1">
        <text>NAD(+) + ATP = ADP + NADP(+) + H(+)</text>
        <dbReference type="Rhea" id="RHEA:18629"/>
        <dbReference type="ChEBI" id="CHEBI:15378"/>
        <dbReference type="ChEBI" id="CHEBI:30616"/>
        <dbReference type="ChEBI" id="CHEBI:57540"/>
        <dbReference type="ChEBI" id="CHEBI:58349"/>
        <dbReference type="ChEBI" id="CHEBI:456216"/>
        <dbReference type="EC" id="2.7.1.23"/>
    </reaction>
</comment>
<comment type="cofactor">
    <cofactor evidence="1">
        <name>a divalent metal cation</name>
        <dbReference type="ChEBI" id="CHEBI:60240"/>
    </cofactor>
</comment>
<comment type="subcellular location">
    <subcellularLocation>
        <location evidence="1">Cytoplasm</location>
    </subcellularLocation>
</comment>
<comment type="similarity">
    <text evidence="1">Belongs to the NAD kinase family.</text>
</comment>
<gene>
    <name evidence="1" type="primary">nadK</name>
    <name type="ordered locus">SPT_1143</name>
</gene>
<protein>
    <recommendedName>
        <fullName evidence="1">NAD kinase</fullName>
        <ecNumber evidence="1">2.7.1.23</ecNumber>
    </recommendedName>
    <alternativeName>
        <fullName evidence="1">ATP-dependent NAD kinase</fullName>
    </alternativeName>
</protein>
<keyword id="KW-0067">ATP-binding</keyword>
<keyword id="KW-0963">Cytoplasm</keyword>
<keyword id="KW-0418">Kinase</keyword>
<keyword id="KW-0520">NAD</keyword>
<keyword id="KW-0521">NADP</keyword>
<keyword id="KW-0547">Nucleotide-binding</keyword>
<keyword id="KW-0808">Transferase</keyword>
<organism>
    <name type="scientific">Streptococcus pneumoniae (strain Taiwan19F-14)</name>
    <dbReference type="NCBI Taxonomy" id="487213"/>
    <lineage>
        <taxon>Bacteria</taxon>
        <taxon>Bacillati</taxon>
        <taxon>Bacillota</taxon>
        <taxon>Bacilli</taxon>
        <taxon>Lactobacillales</taxon>
        <taxon>Streptococcaceae</taxon>
        <taxon>Streptococcus</taxon>
    </lineage>
</organism>
<accession>C1CRK0</accession>
<feature type="chain" id="PRO_1000192525" description="NAD kinase">
    <location>
        <begin position="1"/>
        <end position="272"/>
    </location>
</feature>
<feature type="active site" description="Proton acceptor" evidence="1">
    <location>
        <position position="50"/>
    </location>
</feature>
<feature type="binding site" evidence="1">
    <location>
        <begin position="50"/>
        <end position="51"/>
    </location>
    <ligand>
        <name>NAD(+)</name>
        <dbReference type="ChEBI" id="CHEBI:57540"/>
    </ligand>
</feature>
<feature type="binding site" evidence="1">
    <location>
        <begin position="126"/>
        <end position="127"/>
    </location>
    <ligand>
        <name>NAD(+)</name>
        <dbReference type="ChEBI" id="CHEBI:57540"/>
    </ligand>
</feature>
<feature type="binding site" evidence="1">
    <location>
        <position position="152"/>
    </location>
    <ligand>
        <name>NAD(+)</name>
        <dbReference type="ChEBI" id="CHEBI:57540"/>
    </ligand>
</feature>
<feature type="binding site" evidence="1">
    <location>
        <position position="154"/>
    </location>
    <ligand>
        <name>NAD(+)</name>
        <dbReference type="ChEBI" id="CHEBI:57540"/>
    </ligand>
</feature>
<feature type="binding site" evidence="1">
    <location>
        <begin position="165"/>
        <end position="170"/>
    </location>
    <ligand>
        <name>NAD(+)</name>
        <dbReference type="ChEBI" id="CHEBI:57540"/>
    </ligand>
</feature>
<feature type="binding site" evidence="1">
    <location>
        <position position="189"/>
    </location>
    <ligand>
        <name>NAD(+)</name>
        <dbReference type="ChEBI" id="CHEBI:57540"/>
    </ligand>
</feature>
<name>NADK_STRZT</name>
<proteinExistence type="inferred from homology"/>
<dbReference type="EC" id="2.7.1.23" evidence="1"/>
<dbReference type="EMBL" id="CP000921">
    <property type="protein sequence ID" value="ACO22543.1"/>
    <property type="molecule type" value="Genomic_DNA"/>
</dbReference>
<dbReference type="RefSeq" id="WP_000799053.1">
    <property type="nucleotide sequence ID" value="NC_012469.1"/>
</dbReference>
<dbReference type="SMR" id="C1CRK0"/>
<dbReference type="KEGG" id="snt:SPT_1143"/>
<dbReference type="HOGENOM" id="CLU_008831_0_3_9"/>
<dbReference type="GO" id="GO:0005737">
    <property type="term" value="C:cytoplasm"/>
    <property type="evidence" value="ECO:0007669"/>
    <property type="project" value="UniProtKB-SubCell"/>
</dbReference>
<dbReference type="GO" id="GO:0005524">
    <property type="term" value="F:ATP binding"/>
    <property type="evidence" value="ECO:0007669"/>
    <property type="project" value="UniProtKB-KW"/>
</dbReference>
<dbReference type="GO" id="GO:0046872">
    <property type="term" value="F:metal ion binding"/>
    <property type="evidence" value="ECO:0007669"/>
    <property type="project" value="UniProtKB-UniRule"/>
</dbReference>
<dbReference type="GO" id="GO:0051287">
    <property type="term" value="F:NAD binding"/>
    <property type="evidence" value="ECO:0007669"/>
    <property type="project" value="UniProtKB-ARBA"/>
</dbReference>
<dbReference type="GO" id="GO:0003951">
    <property type="term" value="F:NAD+ kinase activity"/>
    <property type="evidence" value="ECO:0007669"/>
    <property type="project" value="UniProtKB-UniRule"/>
</dbReference>
<dbReference type="GO" id="GO:0019674">
    <property type="term" value="P:NAD metabolic process"/>
    <property type="evidence" value="ECO:0007669"/>
    <property type="project" value="InterPro"/>
</dbReference>
<dbReference type="GO" id="GO:0006741">
    <property type="term" value="P:NADP biosynthetic process"/>
    <property type="evidence" value="ECO:0007669"/>
    <property type="project" value="UniProtKB-UniRule"/>
</dbReference>
<dbReference type="FunFam" id="2.60.200.30:FF:000002">
    <property type="entry name" value="NAD kinase"/>
    <property type="match status" value="1"/>
</dbReference>
<dbReference type="Gene3D" id="3.40.50.10330">
    <property type="entry name" value="Probable inorganic polyphosphate/atp-NAD kinase, domain 1"/>
    <property type="match status" value="1"/>
</dbReference>
<dbReference type="Gene3D" id="2.60.200.30">
    <property type="entry name" value="Probable inorganic polyphosphate/atp-NAD kinase, domain 2"/>
    <property type="match status" value="1"/>
</dbReference>
<dbReference type="HAMAP" id="MF_00361">
    <property type="entry name" value="NAD_kinase"/>
    <property type="match status" value="1"/>
</dbReference>
<dbReference type="InterPro" id="IPR017438">
    <property type="entry name" value="ATP-NAD_kinase_N"/>
</dbReference>
<dbReference type="InterPro" id="IPR017437">
    <property type="entry name" value="ATP-NAD_kinase_PpnK-typ_C"/>
</dbReference>
<dbReference type="InterPro" id="IPR016064">
    <property type="entry name" value="NAD/diacylglycerol_kinase_sf"/>
</dbReference>
<dbReference type="InterPro" id="IPR002504">
    <property type="entry name" value="NADK"/>
</dbReference>
<dbReference type="NCBIfam" id="NF003424">
    <property type="entry name" value="PRK04885.1"/>
    <property type="match status" value="1"/>
</dbReference>
<dbReference type="PANTHER" id="PTHR20275">
    <property type="entry name" value="NAD KINASE"/>
    <property type="match status" value="1"/>
</dbReference>
<dbReference type="PANTHER" id="PTHR20275:SF0">
    <property type="entry name" value="NAD KINASE"/>
    <property type="match status" value="1"/>
</dbReference>
<dbReference type="Pfam" id="PF20143">
    <property type="entry name" value="NAD_kinase_C"/>
    <property type="match status" value="1"/>
</dbReference>
<dbReference type="SUPFAM" id="SSF111331">
    <property type="entry name" value="NAD kinase/diacylglycerol kinase-like"/>
    <property type="match status" value="1"/>
</dbReference>
<reference key="1">
    <citation type="journal article" date="2010" name="Genome Biol.">
        <title>Structure and dynamics of the pan-genome of Streptococcus pneumoniae and closely related species.</title>
        <authorList>
            <person name="Donati C."/>
            <person name="Hiller N.L."/>
            <person name="Tettelin H."/>
            <person name="Muzzi A."/>
            <person name="Croucher N.J."/>
            <person name="Angiuoli S.V."/>
            <person name="Oggioni M."/>
            <person name="Dunning Hotopp J.C."/>
            <person name="Hu F.Z."/>
            <person name="Riley D.R."/>
            <person name="Covacci A."/>
            <person name="Mitchell T.J."/>
            <person name="Bentley S.D."/>
            <person name="Kilian M."/>
            <person name="Ehrlich G.D."/>
            <person name="Rappuoli R."/>
            <person name="Moxon E.R."/>
            <person name="Masignani V."/>
        </authorList>
    </citation>
    <scope>NUCLEOTIDE SEQUENCE [LARGE SCALE GENOMIC DNA]</scope>
    <source>
        <strain>Taiwan19F-14</strain>
    </source>
</reference>